<evidence type="ECO:0000250" key="1"/>
<evidence type="ECO:0000305" key="2"/>
<feature type="chain" id="PRO_0000420959" description="Putative 8-amino-7-oxononanoate synthase 2">
    <location>
        <begin position="1"/>
        <end position="771"/>
    </location>
</feature>
<feature type="region of interest" description="Unknown">
    <location>
        <begin position="1"/>
        <end position="418"/>
    </location>
</feature>
<feature type="region of interest" description="KAPA synthase">
    <location>
        <begin position="419"/>
        <end position="771"/>
    </location>
</feature>
<feature type="binding site" evidence="1">
    <location>
        <position position="407"/>
    </location>
    <ligand>
        <name>substrate</name>
    </ligand>
</feature>
<feature type="binding site" evidence="1">
    <location>
        <begin position="485"/>
        <end position="486"/>
    </location>
    <ligand>
        <name>pyridoxal 5'-phosphate</name>
        <dbReference type="ChEBI" id="CHEBI:597326"/>
    </ligand>
</feature>
<feature type="binding site" evidence="1">
    <location>
        <position position="510"/>
    </location>
    <ligand>
        <name>substrate</name>
    </ligand>
</feature>
<feature type="binding site" evidence="1">
    <location>
        <position position="556"/>
    </location>
    <ligand>
        <name>pyridoxal 5'-phosphate</name>
        <dbReference type="ChEBI" id="CHEBI:597326"/>
    </ligand>
</feature>
<feature type="binding site" evidence="1">
    <location>
        <begin position="581"/>
        <end position="584"/>
    </location>
    <ligand>
        <name>pyridoxal 5'-phosphate</name>
        <dbReference type="ChEBI" id="CHEBI:597326"/>
    </ligand>
</feature>
<feature type="modified residue" description="N6-(pyridoxal phosphate)lysine" evidence="1">
    <location>
        <position position="615"/>
    </location>
</feature>
<reference key="1">
    <citation type="journal article" date="1998" name="Nature">
        <title>Deciphering the biology of Mycobacterium tuberculosis from the complete genome sequence.</title>
        <authorList>
            <person name="Cole S.T."/>
            <person name="Brosch R."/>
            <person name="Parkhill J."/>
            <person name="Garnier T."/>
            <person name="Churcher C.M."/>
            <person name="Harris D.E."/>
            <person name="Gordon S.V."/>
            <person name="Eiglmeier K."/>
            <person name="Gas S."/>
            <person name="Barry C.E. III"/>
            <person name="Tekaia F."/>
            <person name="Badcock K."/>
            <person name="Basham D."/>
            <person name="Brown D."/>
            <person name="Chillingworth T."/>
            <person name="Connor R."/>
            <person name="Davies R.M."/>
            <person name="Devlin K."/>
            <person name="Feltwell T."/>
            <person name="Gentles S."/>
            <person name="Hamlin N."/>
            <person name="Holroyd S."/>
            <person name="Hornsby T."/>
            <person name="Jagels K."/>
            <person name="Krogh A."/>
            <person name="McLean J."/>
            <person name="Moule S."/>
            <person name="Murphy L.D."/>
            <person name="Oliver S."/>
            <person name="Osborne J."/>
            <person name="Quail M.A."/>
            <person name="Rajandream M.A."/>
            <person name="Rogers J."/>
            <person name="Rutter S."/>
            <person name="Seeger K."/>
            <person name="Skelton S."/>
            <person name="Squares S."/>
            <person name="Squares R."/>
            <person name="Sulston J.E."/>
            <person name="Taylor K."/>
            <person name="Whitehead S."/>
            <person name="Barrell B.G."/>
        </authorList>
    </citation>
    <scope>NUCLEOTIDE SEQUENCE [LARGE SCALE GENOMIC DNA]</scope>
    <source>
        <strain>ATCC 25618 / H37Rv</strain>
    </source>
</reference>
<reference key="2">
    <citation type="journal article" date="2011" name="Mol. Cell. Proteomics">
        <title>Proteogenomic analysis of Mycobacterium tuberculosis by high resolution mass spectrometry.</title>
        <authorList>
            <person name="Kelkar D.S."/>
            <person name="Kumar D."/>
            <person name="Kumar P."/>
            <person name="Balakrishnan L."/>
            <person name="Muthusamy B."/>
            <person name="Yadav A.K."/>
            <person name="Shrivastava P."/>
            <person name="Marimuthu A."/>
            <person name="Anand S."/>
            <person name="Sundaram H."/>
            <person name="Kingsbury R."/>
            <person name="Harsha H.C."/>
            <person name="Nair B."/>
            <person name="Prasad T.S."/>
            <person name="Chauhan D.S."/>
            <person name="Katoch K."/>
            <person name="Katoch V.M."/>
            <person name="Kumar P."/>
            <person name="Chaerkady R."/>
            <person name="Ramachandran S."/>
            <person name="Dash D."/>
            <person name="Pandey A."/>
        </authorList>
    </citation>
    <scope>IDENTIFICATION BY MASS SPECTROMETRY [LARGE SCALE ANALYSIS]</scope>
    <source>
        <strain>ATCC 25618 / H37Rv</strain>
    </source>
</reference>
<proteinExistence type="evidence at protein level"/>
<organism>
    <name type="scientific">Mycobacterium tuberculosis (strain ATCC 25618 / H37Rv)</name>
    <dbReference type="NCBI Taxonomy" id="83332"/>
    <lineage>
        <taxon>Bacteria</taxon>
        <taxon>Bacillati</taxon>
        <taxon>Actinomycetota</taxon>
        <taxon>Actinomycetes</taxon>
        <taxon>Mycobacteriales</taxon>
        <taxon>Mycobacteriaceae</taxon>
        <taxon>Mycobacterium</taxon>
        <taxon>Mycobacterium tuberculosis complex</taxon>
    </lineage>
</organism>
<accession>P9WQ85</accession>
<accession>L0T270</accession>
<accession>P71602</accession>
<accession>Q7DAK0</accession>
<keyword id="KW-0012">Acyltransferase</keyword>
<keyword id="KW-0663">Pyridoxal phosphate</keyword>
<keyword id="KW-1185">Reference proteome</keyword>
<keyword id="KW-0808">Transferase</keyword>
<dbReference type="EC" id="2.3.1.47"/>
<dbReference type="EMBL" id="AL123456">
    <property type="protein sequence ID" value="CCP42754.1"/>
    <property type="molecule type" value="Genomic_DNA"/>
</dbReference>
<dbReference type="PIR" id="F70701">
    <property type="entry name" value="F70701"/>
</dbReference>
<dbReference type="RefSeq" id="NP_214546.1">
    <property type="nucleotide sequence ID" value="NC_000962.3"/>
</dbReference>
<dbReference type="RefSeq" id="WP_003905217.1">
    <property type="nucleotide sequence ID" value="NZ_NVQJ01000005.1"/>
</dbReference>
<dbReference type="SMR" id="P9WQ85"/>
<dbReference type="FunCoup" id="P9WQ85">
    <property type="interactions" value="132"/>
</dbReference>
<dbReference type="STRING" id="83332.Rv0032"/>
<dbReference type="PaxDb" id="83332-Rv0032"/>
<dbReference type="DNASU" id="887050"/>
<dbReference type="GeneID" id="887050"/>
<dbReference type="KEGG" id="mtu:Rv0032"/>
<dbReference type="KEGG" id="mtv:RVBD_0032"/>
<dbReference type="TubercuList" id="Rv0032"/>
<dbReference type="eggNOG" id="COG0156">
    <property type="taxonomic scope" value="Bacteria"/>
</dbReference>
<dbReference type="eggNOG" id="COG3146">
    <property type="taxonomic scope" value="Bacteria"/>
</dbReference>
<dbReference type="InParanoid" id="P9WQ85"/>
<dbReference type="OrthoDB" id="9807157at2"/>
<dbReference type="Proteomes" id="UP000001584">
    <property type="component" value="Chromosome"/>
</dbReference>
<dbReference type="GO" id="GO:0009274">
    <property type="term" value="C:peptidoglycan-based cell wall"/>
    <property type="evidence" value="ECO:0007005"/>
    <property type="project" value="MTBBASE"/>
</dbReference>
<dbReference type="GO" id="GO:0008710">
    <property type="term" value="F:8-amino-7-oxononanoate synthase activity"/>
    <property type="evidence" value="ECO:0007669"/>
    <property type="project" value="UniProtKB-EC"/>
</dbReference>
<dbReference type="GO" id="GO:0030170">
    <property type="term" value="F:pyridoxal phosphate binding"/>
    <property type="evidence" value="ECO:0007669"/>
    <property type="project" value="InterPro"/>
</dbReference>
<dbReference type="GO" id="GO:0009058">
    <property type="term" value="P:biosynthetic process"/>
    <property type="evidence" value="ECO:0007669"/>
    <property type="project" value="InterPro"/>
</dbReference>
<dbReference type="FunFam" id="3.40.630.30:FF:000197">
    <property type="entry name" value="Possible 8-amino-7-oxononanoate synthase bioF2"/>
    <property type="match status" value="1"/>
</dbReference>
<dbReference type="FunFam" id="3.40.640.10:FF:000173">
    <property type="entry name" value="Possible 8-amino-7-oxononanoate synthase bioF2"/>
    <property type="match status" value="1"/>
</dbReference>
<dbReference type="Gene3D" id="3.40.630.30">
    <property type="match status" value="1"/>
</dbReference>
<dbReference type="Gene3D" id="3.90.1150.10">
    <property type="entry name" value="Aspartate Aminotransferase, domain 1"/>
    <property type="match status" value="1"/>
</dbReference>
<dbReference type="Gene3D" id="3.40.640.10">
    <property type="entry name" value="Type I PLP-dependent aspartate aminotransferase-like (Major domain)"/>
    <property type="match status" value="1"/>
</dbReference>
<dbReference type="InterPro" id="IPR016181">
    <property type="entry name" value="Acyl_CoA_acyltransferase"/>
</dbReference>
<dbReference type="InterPro" id="IPR001917">
    <property type="entry name" value="Aminotrans_II_pyridoxalP_BS"/>
</dbReference>
<dbReference type="InterPro" id="IPR004839">
    <property type="entry name" value="Aminotransferase_I/II_large"/>
</dbReference>
<dbReference type="InterPro" id="IPR050087">
    <property type="entry name" value="AON_synthase_class-II"/>
</dbReference>
<dbReference type="InterPro" id="IPR038740">
    <property type="entry name" value="BioF2-like_GNAT_dom"/>
</dbReference>
<dbReference type="InterPro" id="IPR015424">
    <property type="entry name" value="PyrdxlP-dep_Trfase"/>
</dbReference>
<dbReference type="InterPro" id="IPR015421">
    <property type="entry name" value="PyrdxlP-dep_Trfase_major"/>
</dbReference>
<dbReference type="InterPro" id="IPR015422">
    <property type="entry name" value="PyrdxlP-dep_Trfase_small"/>
</dbReference>
<dbReference type="PANTHER" id="PTHR13693">
    <property type="entry name" value="CLASS II AMINOTRANSFERASE/8-AMINO-7-OXONONANOATE SYNTHASE"/>
    <property type="match status" value="1"/>
</dbReference>
<dbReference type="PANTHER" id="PTHR13693:SF3">
    <property type="entry name" value="LD36009P"/>
    <property type="match status" value="1"/>
</dbReference>
<dbReference type="Pfam" id="PF13480">
    <property type="entry name" value="Acetyltransf_6"/>
    <property type="match status" value="1"/>
</dbReference>
<dbReference type="Pfam" id="PF00155">
    <property type="entry name" value="Aminotran_1_2"/>
    <property type="match status" value="1"/>
</dbReference>
<dbReference type="SUPFAM" id="SSF55729">
    <property type="entry name" value="Acyl-CoA N-acyltransferases (Nat)"/>
    <property type="match status" value="1"/>
</dbReference>
<dbReference type="SUPFAM" id="SSF53383">
    <property type="entry name" value="PLP-dependent transferases"/>
    <property type="match status" value="1"/>
</dbReference>
<dbReference type="PROSITE" id="PS00599">
    <property type="entry name" value="AA_TRANSFER_CLASS_2"/>
    <property type="match status" value="1"/>
</dbReference>
<name>BIOF2_MYCTU</name>
<comment type="function">
    <text evidence="1">Catalyzes the decarboxylative condensation of pimeloyl-[acyl-carrier protein] and L-alanine to produce 8-amino-7-oxononanoate (AON), [acyl-carrier protein], and carbon dioxide.</text>
</comment>
<comment type="catalytic activity">
    <reaction>
        <text>6-carboxyhexanoyl-[ACP] + L-alanine + H(+) = (8S)-8-amino-7-oxononanoate + holo-[ACP] + CO2</text>
        <dbReference type="Rhea" id="RHEA:42288"/>
        <dbReference type="Rhea" id="RHEA-COMP:9685"/>
        <dbReference type="Rhea" id="RHEA-COMP:9955"/>
        <dbReference type="ChEBI" id="CHEBI:15378"/>
        <dbReference type="ChEBI" id="CHEBI:16526"/>
        <dbReference type="ChEBI" id="CHEBI:57972"/>
        <dbReference type="ChEBI" id="CHEBI:64479"/>
        <dbReference type="ChEBI" id="CHEBI:78846"/>
        <dbReference type="ChEBI" id="CHEBI:149468"/>
        <dbReference type="EC" id="2.3.1.47"/>
    </reaction>
</comment>
<comment type="cofactor">
    <cofactor evidence="1">
        <name>pyridoxal 5'-phosphate</name>
        <dbReference type="ChEBI" id="CHEBI:597326"/>
    </cofactor>
</comment>
<comment type="similarity">
    <text evidence="2">In the C-terminal section; belongs to the class-II pyridoxal-phosphate-dependent aminotransferase family. BioF subfamily.</text>
</comment>
<sequence length="771" mass="86243">MPTGLGYDFLRPVEDSGINDLKHYYFMADLADGQPLGRANLYSVCFDLATTDRKLTPAWRTTIKRWFPGFMTFRFLECGLLTMVSNPLALRSDTDLERVLPVLAGQMDQLAHDDGSDFLMIRDVDPEHYQRYLDILRPLGFRPALGFSRVDTTISWSSVEEALGCLSHKRRLPLKTSLEFRERFGIEVEELDEYAEHAPVLARLWRNVKTEAKDYQREDLNPEFFAACSRHLHGRSRLWLFRYQGTPIAFFLNVWGADENYILLEWGIDRDFEHYRKANLYRAALMLSLKDAISRDKRRMEMGITNYFTKLRIPGARVIPTIYFLRHSTDPVHTATLARMMMHNIQRPTLPDDMSEEFCRWEERIRLDQDGLPEHDIFRKIDRQHKYTGLKLGGVYGFYPRFTGPQRSTVKAAELGEIVLLGTNSYLGLATHPEVVEASAEATRRYGTGCSGSPLLNGTLDLHVSLEQELACFLGKPAAVLCSTGYQSNLAAISALCESGDMIIQDALNHRSLFDAARLSGADFTLYRHNDMDHLARVLRRTEGRRRIIVVDAVFSMEGTVADLATIAELADRHGCRVYVDESHALGVLGPDGRGASAALGVLARMDVVMGTFSKSFASVGGFIAGDRPVVDYIRHNGSGHVFSASLPPAAAAATHAALRVSRREPDRRARVLAAAEYMATGLARQGYQAEYHGTAIVPVILGNPTVAHAGYLRLMRSGVYVNPVAPPAVPEERSGFRTSYLADHRQSDLDRALHVFAGLAEDLTPQGAAL</sequence>
<protein>
    <recommendedName>
        <fullName>Putative 8-amino-7-oxononanoate synthase 2</fullName>
        <shortName>AONS</shortName>
        <ecNumber>2.3.1.47</ecNumber>
    </recommendedName>
    <alternativeName>
        <fullName>7-keto-8-amino-pelargonic acid synthase</fullName>
        <shortName>7-KAP synthase</shortName>
        <shortName>KAPA synthase</shortName>
    </alternativeName>
    <alternativeName>
        <fullName>8-amino-7-ketopelargonate synthase</fullName>
    </alternativeName>
</protein>
<gene>
    <name type="primary">bioF2</name>
    <name type="ordered locus">Rv0032</name>
</gene>